<feature type="chain" id="PRO_1000043674" description="GTP cyclohydrolase 1">
    <location>
        <begin position="1"/>
        <end position="190"/>
    </location>
</feature>
<feature type="binding site" evidence="2">
    <location>
        <position position="75"/>
    </location>
    <ligand>
        <name>Zn(2+)</name>
        <dbReference type="ChEBI" id="CHEBI:29105"/>
    </ligand>
</feature>
<feature type="binding site" evidence="2">
    <location>
        <position position="78"/>
    </location>
    <ligand>
        <name>Zn(2+)</name>
        <dbReference type="ChEBI" id="CHEBI:29105"/>
    </ligand>
</feature>
<feature type="binding site" evidence="2">
    <location>
        <position position="146"/>
    </location>
    <ligand>
        <name>Zn(2+)</name>
        <dbReference type="ChEBI" id="CHEBI:29105"/>
    </ligand>
</feature>
<keyword id="KW-0342">GTP-binding</keyword>
<keyword id="KW-0378">Hydrolase</keyword>
<keyword id="KW-0479">Metal-binding</keyword>
<keyword id="KW-0547">Nucleotide-binding</keyword>
<keyword id="KW-0554">One-carbon metabolism</keyword>
<keyword id="KW-0862">Zinc</keyword>
<protein>
    <recommendedName>
        <fullName evidence="2">GTP cyclohydrolase 1</fullName>
        <ecNumber evidence="2">3.5.4.16</ecNumber>
    </recommendedName>
    <alternativeName>
        <fullName evidence="2">GTP cyclohydrolase I</fullName>
        <shortName evidence="2">GTP-CH-I</shortName>
    </alternativeName>
</protein>
<name>GCH1_CAMJR</name>
<accession>Q5HWX4</accession>
<evidence type="ECO:0000250" key="1"/>
<evidence type="ECO:0000255" key="2">
    <source>
        <dbReference type="HAMAP-Rule" id="MF_00223"/>
    </source>
</evidence>
<comment type="catalytic activity">
    <reaction evidence="2">
        <text>GTP + H2O = 7,8-dihydroneopterin 3'-triphosphate + formate + H(+)</text>
        <dbReference type="Rhea" id="RHEA:17473"/>
        <dbReference type="ChEBI" id="CHEBI:15377"/>
        <dbReference type="ChEBI" id="CHEBI:15378"/>
        <dbReference type="ChEBI" id="CHEBI:15740"/>
        <dbReference type="ChEBI" id="CHEBI:37565"/>
        <dbReference type="ChEBI" id="CHEBI:58462"/>
        <dbReference type="EC" id="3.5.4.16"/>
    </reaction>
</comment>
<comment type="pathway">
    <text evidence="2">Cofactor biosynthesis; 7,8-dihydroneopterin triphosphate biosynthesis; 7,8-dihydroneopterin triphosphate from GTP: step 1/1.</text>
</comment>
<comment type="subunit">
    <text evidence="1">Toroid-shaped homodecamer, composed of two pentamers of five dimers.</text>
</comment>
<comment type="similarity">
    <text evidence="2">Belongs to the GTP cyclohydrolase I family.</text>
</comment>
<reference key="1">
    <citation type="journal article" date="2005" name="PLoS Biol.">
        <title>Major structural differences and novel potential virulence mechanisms from the genomes of multiple Campylobacter species.</title>
        <authorList>
            <person name="Fouts D.E."/>
            <person name="Mongodin E.F."/>
            <person name="Mandrell R.E."/>
            <person name="Miller W.G."/>
            <person name="Rasko D.A."/>
            <person name="Ravel J."/>
            <person name="Brinkac L.M."/>
            <person name="DeBoy R.T."/>
            <person name="Parker C.T."/>
            <person name="Daugherty S.C."/>
            <person name="Dodson R.J."/>
            <person name="Durkin A.S."/>
            <person name="Madupu R."/>
            <person name="Sullivan S.A."/>
            <person name="Shetty J.U."/>
            <person name="Ayodeji M.A."/>
            <person name="Shvartsbeyn A."/>
            <person name="Schatz M.C."/>
            <person name="Badger J.H."/>
            <person name="Fraser C.M."/>
            <person name="Nelson K.E."/>
        </authorList>
    </citation>
    <scope>NUCLEOTIDE SEQUENCE [LARGE SCALE GENOMIC DNA]</scope>
    <source>
        <strain>RM1221</strain>
    </source>
</reference>
<sequence>MQKKFEDCVKTILEIIGENPNREGLIKTPNRVFKAYEFLASGYTQNVKDILNDALFESSNNEMVLVRDIEFYSLCEHHLLPFFGRAHVAYIPNKKVVGLSKIPRLVEVFARRLQIQEQLTEQIAQALMENVDAKGVGVVIEARHMCVEMRGIQKANSTTTTSALRGIFLKNEKTREEFFSLINSAKQVRF</sequence>
<gene>
    <name evidence="2" type="primary">folE</name>
    <name type="ordered locus">CJE0187</name>
</gene>
<proteinExistence type="inferred from homology"/>
<organism>
    <name type="scientific">Campylobacter jejuni (strain RM1221)</name>
    <dbReference type="NCBI Taxonomy" id="195099"/>
    <lineage>
        <taxon>Bacteria</taxon>
        <taxon>Pseudomonadati</taxon>
        <taxon>Campylobacterota</taxon>
        <taxon>Epsilonproteobacteria</taxon>
        <taxon>Campylobacterales</taxon>
        <taxon>Campylobacteraceae</taxon>
        <taxon>Campylobacter</taxon>
    </lineage>
</organism>
<dbReference type="EC" id="3.5.4.16" evidence="2"/>
<dbReference type="EMBL" id="CP000025">
    <property type="protein sequence ID" value="AAW34782.1"/>
    <property type="molecule type" value="Genomic_DNA"/>
</dbReference>
<dbReference type="RefSeq" id="WP_002867111.1">
    <property type="nucleotide sequence ID" value="NC_003912.7"/>
</dbReference>
<dbReference type="SMR" id="Q5HWX4"/>
<dbReference type="KEGG" id="cjr:CJE0187"/>
<dbReference type="HOGENOM" id="CLU_049768_3_1_7"/>
<dbReference type="UniPathway" id="UPA00848">
    <property type="reaction ID" value="UER00151"/>
</dbReference>
<dbReference type="GO" id="GO:0005737">
    <property type="term" value="C:cytoplasm"/>
    <property type="evidence" value="ECO:0007669"/>
    <property type="project" value="TreeGrafter"/>
</dbReference>
<dbReference type="GO" id="GO:0005525">
    <property type="term" value="F:GTP binding"/>
    <property type="evidence" value="ECO:0007669"/>
    <property type="project" value="UniProtKB-KW"/>
</dbReference>
<dbReference type="GO" id="GO:0003934">
    <property type="term" value="F:GTP cyclohydrolase I activity"/>
    <property type="evidence" value="ECO:0007669"/>
    <property type="project" value="UniProtKB-UniRule"/>
</dbReference>
<dbReference type="GO" id="GO:0008270">
    <property type="term" value="F:zinc ion binding"/>
    <property type="evidence" value="ECO:0007669"/>
    <property type="project" value="UniProtKB-UniRule"/>
</dbReference>
<dbReference type="GO" id="GO:0006730">
    <property type="term" value="P:one-carbon metabolic process"/>
    <property type="evidence" value="ECO:0007669"/>
    <property type="project" value="UniProtKB-UniRule"/>
</dbReference>
<dbReference type="GO" id="GO:0006729">
    <property type="term" value="P:tetrahydrobiopterin biosynthetic process"/>
    <property type="evidence" value="ECO:0007669"/>
    <property type="project" value="TreeGrafter"/>
</dbReference>
<dbReference type="GO" id="GO:0046654">
    <property type="term" value="P:tetrahydrofolate biosynthetic process"/>
    <property type="evidence" value="ECO:0007669"/>
    <property type="project" value="UniProtKB-UniRule"/>
</dbReference>
<dbReference type="CDD" id="cd00642">
    <property type="entry name" value="GTP_cyclohydro1"/>
    <property type="match status" value="1"/>
</dbReference>
<dbReference type="FunFam" id="3.30.1130.10:FF:000001">
    <property type="entry name" value="GTP cyclohydrolase 1"/>
    <property type="match status" value="1"/>
</dbReference>
<dbReference type="Gene3D" id="1.10.286.10">
    <property type="match status" value="1"/>
</dbReference>
<dbReference type="Gene3D" id="3.30.1130.10">
    <property type="match status" value="1"/>
</dbReference>
<dbReference type="HAMAP" id="MF_00223">
    <property type="entry name" value="FolE"/>
    <property type="match status" value="1"/>
</dbReference>
<dbReference type="InterPro" id="IPR043133">
    <property type="entry name" value="GTP-CH-I_C/QueF"/>
</dbReference>
<dbReference type="InterPro" id="IPR043134">
    <property type="entry name" value="GTP-CH-I_N"/>
</dbReference>
<dbReference type="InterPro" id="IPR001474">
    <property type="entry name" value="GTP_CycHdrlase_I"/>
</dbReference>
<dbReference type="InterPro" id="IPR018234">
    <property type="entry name" value="GTP_CycHdrlase_I_CS"/>
</dbReference>
<dbReference type="InterPro" id="IPR020602">
    <property type="entry name" value="GTP_CycHdrlase_I_dom"/>
</dbReference>
<dbReference type="NCBIfam" id="TIGR00063">
    <property type="entry name" value="folE"/>
    <property type="match status" value="1"/>
</dbReference>
<dbReference type="NCBIfam" id="NF006825">
    <property type="entry name" value="PRK09347.1-2"/>
    <property type="match status" value="1"/>
</dbReference>
<dbReference type="NCBIfam" id="NF006826">
    <property type="entry name" value="PRK09347.1-3"/>
    <property type="match status" value="1"/>
</dbReference>
<dbReference type="PANTHER" id="PTHR11109:SF7">
    <property type="entry name" value="GTP CYCLOHYDROLASE 1"/>
    <property type="match status" value="1"/>
</dbReference>
<dbReference type="PANTHER" id="PTHR11109">
    <property type="entry name" value="GTP CYCLOHYDROLASE I"/>
    <property type="match status" value="1"/>
</dbReference>
<dbReference type="Pfam" id="PF01227">
    <property type="entry name" value="GTP_cyclohydroI"/>
    <property type="match status" value="1"/>
</dbReference>
<dbReference type="SUPFAM" id="SSF55620">
    <property type="entry name" value="Tetrahydrobiopterin biosynthesis enzymes-like"/>
    <property type="match status" value="1"/>
</dbReference>
<dbReference type="PROSITE" id="PS00859">
    <property type="entry name" value="GTP_CYCLOHYDROL_1_1"/>
    <property type="match status" value="1"/>
</dbReference>